<organism>
    <name type="scientific">Mycoplasma genitalium (strain ATCC 33530 / DSM 19775 / NCTC 10195 / G37)</name>
    <name type="common">Mycoplasmoides genitalium</name>
    <dbReference type="NCBI Taxonomy" id="243273"/>
    <lineage>
        <taxon>Bacteria</taxon>
        <taxon>Bacillati</taxon>
        <taxon>Mycoplasmatota</taxon>
        <taxon>Mycoplasmoidales</taxon>
        <taxon>Mycoplasmoidaceae</taxon>
        <taxon>Mycoplasmoides</taxon>
    </lineage>
</organism>
<keyword id="KW-1185">Reference proteome</keyword>
<keyword id="KW-0687">Ribonucleoprotein</keyword>
<keyword id="KW-0689">Ribosomal protein</keyword>
<protein>
    <recommendedName>
        <fullName evidence="1">Large ribosomal subunit protein bL33B</fullName>
    </recommendedName>
    <alternativeName>
        <fullName>50S ribosomal protein L33 2</fullName>
    </alternativeName>
</protein>
<reference key="1">
    <citation type="journal article" date="1995" name="Science">
        <title>The minimal gene complement of Mycoplasma genitalium.</title>
        <authorList>
            <person name="Fraser C.M."/>
            <person name="Gocayne J.D."/>
            <person name="White O."/>
            <person name="Adams M.D."/>
            <person name="Clayton R.A."/>
            <person name="Fleischmann R.D."/>
            <person name="Bult C.J."/>
            <person name="Kerlavage A.R."/>
            <person name="Sutton G.G."/>
            <person name="Kelley J.M."/>
            <person name="Fritchman J.L."/>
            <person name="Weidman J.F."/>
            <person name="Small K.V."/>
            <person name="Sandusky M."/>
            <person name="Fuhrmann J.L."/>
            <person name="Nguyen D.T."/>
            <person name="Utterback T.R."/>
            <person name="Saudek D.M."/>
            <person name="Phillips C.A."/>
            <person name="Merrick J.M."/>
            <person name="Tomb J.-F."/>
            <person name="Dougherty B.A."/>
            <person name="Bott K.F."/>
            <person name="Hu P.-C."/>
            <person name="Lucier T.S."/>
            <person name="Peterson S.N."/>
            <person name="Smith H.O."/>
            <person name="Hutchison C.A. III"/>
            <person name="Venter J.C."/>
        </authorList>
    </citation>
    <scope>NUCLEOTIDE SEQUENCE [LARGE SCALE GENOMIC DNA]</scope>
    <source>
        <strain>ATCC 33530 / DSM 19775 / NCTC 10195 / G37</strain>
    </source>
</reference>
<reference key="2">
    <citation type="submission" date="1998-10" db="EMBL/GenBank/DDBJ databases">
        <authorList>
            <person name="Fraser C.M."/>
            <person name="Gocayne J.D."/>
            <person name="White O."/>
            <person name="Adams M.D."/>
            <person name="Clayton R.A."/>
            <person name="Fleischmann R.D."/>
            <person name="Bult C.J."/>
            <person name="Kerlavage A.R."/>
            <person name="Sutton G.G."/>
            <person name="Kelley J.M."/>
            <person name="Fritchman J.L."/>
            <person name="Weidman J.F."/>
            <person name="Small K.V."/>
            <person name="Sandusky M."/>
            <person name="Fuhrmann J.L."/>
            <person name="Nguyen D.T."/>
            <person name="Utterback T.R."/>
            <person name="Saudek D.M."/>
            <person name="Phillips C.A."/>
            <person name="Merrick J.M."/>
            <person name="Tomb J.-F."/>
            <person name="Dougherty B.A."/>
            <person name="Bott K.F."/>
            <person name="Hu P.-C."/>
            <person name="Lucier T.S."/>
            <person name="Peterson S.N."/>
            <person name="Smith H.O."/>
            <person name="Hutchison C.A. III"/>
            <person name="Venter J.C."/>
        </authorList>
    </citation>
    <scope>IDENTIFICATION</scope>
</reference>
<gene>
    <name type="primary">rpmG2</name>
    <name type="ordered locus">MG055.1</name>
</gene>
<comment type="similarity">
    <text evidence="2">Belongs to the bacterial ribosomal protein bL33 family.</text>
</comment>
<evidence type="ECO:0000255" key="1">
    <source>
        <dbReference type="HAMAP-Rule" id="MF_00294"/>
    </source>
</evidence>
<evidence type="ECO:0000305" key="2"/>
<sequence>MRKKIIFVCQDCLSRNYVKRWTKQPLQRLIINKYCKQCNQKTKHLDSF</sequence>
<dbReference type="EMBL" id="L43967">
    <property type="protein sequence ID" value="AAC71272.1"/>
    <property type="molecule type" value="Genomic_DNA"/>
</dbReference>
<dbReference type="RefSeq" id="WP_009885719.1">
    <property type="nucleotide sequence ID" value="NC_000908.2"/>
</dbReference>
<dbReference type="SMR" id="Q9ZB82"/>
<dbReference type="FunCoup" id="Q9ZB82">
    <property type="interactions" value="51"/>
</dbReference>
<dbReference type="STRING" id="243273.MG_473"/>
<dbReference type="GeneID" id="88282657"/>
<dbReference type="KEGG" id="mge:MG_473"/>
<dbReference type="eggNOG" id="COG0267">
    <property type="taxonomic scope" value="Bacteria"/>
</dbReference>
<dbReference type="HOGENOM" id="CLU_190949_0_1_14"/>
<dbReference type="InParanoid" id="Q9ZB82"/>
<dbReference type="OrthoDB" id="197660at2"/>
<dbReference type="Proteomes" id="UP000000807">
    <property type="component" value="Chromosome"/>
</dbReference>
<dbReference type="GO" id="GO:0005737">
    <property type="term" value="C:cytoplasm"/>
    <property type="evidence" value="ECO:0007669"/>
    <property type="project" value="UniProtKB-ARBA"/>
</dbReference>
<dbReference type="GO" id="GO:1990904">
    <property type="term" value="C:ribonucleoprotein complex"/>
    <property type="evidence" value="ECO:0007669"/>
    <property type="project" value="UniProtKB-KW"/>
</dbReference>
<dbReference type="GO" id="GO:0005840">
    <property type="term" value="C:ribosome"/>
    <property type="evidence" value="ECO:0007669"/>
    <property type="project" value="UniProtKB-KW"/>
</dbReference>
<dbReference type="GO" id="GO:0003735">
    <property type="term" value="F:structural constituent of ribosome"/>
    <property type="evidence" value="ECO:0007669"/>
    <property type="project" value="InterPro"/>
</dbReference>
<dbReference type="GO" id="GO:0006412">
    <property type="term" value="P:translation"/>
    <property type="evidence" value="ECO:0007669"/>
    <property type="project" value="UniProtKB-UniRule"/>
</dbReference>
<dbReference type="Gene3D" id="2.20.28.120">
    <property type="entry name" value="Ribosomal protein L33"/>
    <property type="match status" value="1"/>
</dbReference>
<dbReference type="HAMAP" id="MF_00294">
    <property type="entry name" value="Ribosomal_bL33"/>
    <property type="match status" value="1"/>
</dbReference>
<dbReference type="InterPro" id="IPR001705">
    <property type="entry name" value="Ribosomal_bL33"/>
</dbReference>
<dbReference type="InterPro" id="IPR038584">
    <property type="entry name" value="Ribosomal_bL33_sf"/>
</dbReference>
<dbReference type="InterPro" id="IPR011332">
    <property type="entry name" value="Ribosomal_zn-bd"/>
</dbReference>
<dbReference type="NCBIfam" id="NF001764">
    <property type="entry name" value="PRK00504.1"/>
    <property type="match status" value="1"/>
</dbReference>
<dbReference type="NCBIfam" id="TIGR01023">
    <property type="entry name" value="rpmG_bact"/>
    <property type="match status" value="1"/>
</dbReference>
<dbReference type="Pfam" id="PF00471">
    <property type="entry name" value="Ribosomal_L33"/>
    <property type="match status" value="1"/>
</dbReference>
<dbReference type="SUPFAM" id="SSF57829">
    <property type="entry name" value="Zn-binding ribosomal proteins"/>
    <property type="match status" value="1"/>
</dbReference>
<proteinExistence type="inferred from homology"/>
<name>RL332_MYCGE</name>
<feature type="chain" id="PRO_0000170188" description="Large ribosomal subunit protein bL33B">
    <location>
        <begin position="1"/>
        <end position="48"/>
    </location>
</feature>
<accession>Q9ZB82</accession>